<name>NHAB_HAEDU</name>
<protein>
    <recommendedName>
        <fullName evidence="1">Na(+)/H(+) antiporter NhaB</fullName>
    </recommendedName>
    <alternativeName>
        <fullName evidence="1">Sodium/proton antiporter NhaB</fullName>
    </alternativeName>
</protein>
<comment type="function">
    <text evidence="1">Na(+)/H(+) antiporter that extrudes sodium in exchange for external protons.</text>
</comment>
<comment type="catalytic activity">
    <reaction evidence="1">
        <text>2 Na(+)(in) + 3 H(+)(out) = 2 Na(+)(out) + 3 H(+)(in)</text>
        <dbReference type="Rhea" id="RHEA:29247"/>
        <dbReference type="ChEBI" id="CHEBI:15378"/>
        <dbReference type="ChEBI" id="CHEBI:29101"/>
    </reaction>
    <physiologicalReaction direction="left-to-right" evidence="1">
        <dbReference type="Rhea" id="RHEA:29248"/>
    </physiologicalReaction>
</comment>
<comment type="subcellular location">
    <subcellularLocation>
        <location evidence="1">Cell inner membrane</location>
        <topology evidence="1">Multi-pass membrane protein</topology>
    </subcellularLocation>
</comment>
<comment type="similarity">
    <text evidence="1">Belongs to the NhaB Na(+)/H(+) (TC 2.A.34) antiporter family.</text>
</comment>
<dbReference type="EMBL" id="AE017143">
    <property type="protein sequence ID" value="AAP96484.1"/>
    <property type="molecule type" value="Genomic_DNA"/>
</dbReference>
<dbReference type="RefSeq" id="WP_010945513.1">
    <property type="nucleotide sequence ID" value="NC_002940.2"/>
</dbReference>
<dbReference type="SMR" id="Q7VKY3"/>
<dbReference type="STRING" id="233412.HD_1728"/>
<dbReference type="KEGG" id="hdu:HD_1728"/>
<dbReference type="eggNOG" id="COG3067">
    <property type="taxonomic scope" value="Bacteria"/>
</dbReference>
<dbReference type="HOGENOM" id="CLU_041110_0_0_6"/>
<dbReference type="OrthoDB" id="5288732at2"/>
<dbReference type="Proteomes" id="UP000001022">
    <property type="component" value="Chromosome"/>
</dbReference>
<dbReference type="GO" id="GO:0005886">
    <property type="term" value="C:plasma membrane"/>
    <property type="evidence" value="ECO:0007669"/>
    <property type="project" value="UniProtKB-SubCell"/>
</dbReference>
<dbReference type="GO" id="GO:0015385">
    <property type="term" value="F:sodium:proton antiporter activity"/>
    <property type="evidence" value="ECO:0007669"/>
    <property type="project" value="InterPro"/>
</dbReference>
<dbReference type="HAMAP" id="MF_01599">
    <property type="entry name" value="NhaB"/>
    <property type="match status" value="1"/>
</dbReference>
<dbReference type="InterPro" id="IPR004671">
    <property type="entry name" value="Na+/H+_antiporter_NhaB"/>
</dbReference>
<dbReference type="NCBIfam" id="TIGR00774">
    <property type="entry name" value="NhaB"/>
    <property type="match status" value="1"/>
</dbReference>
<dbReference type="NCBIfam" id="NF007093">
    <property type="entry name" value="PRK09547.1"/>
    <property type="match status" value="1"/>
</dbReference>
<dbReference type="PANTHER" id="PTHR43302:SF1">
    <property type="entry name" value="NA(+)_H(+) ANTIPORTER NHAB"/>
    <property type="match status" value="1"/>
</dbReference>
<dbReference type="PANTHER" id="PTHR43302">
    <property type="entry name" value="TRANSPORTER ARSB-RELATED"/>
    <property type="match status" value="1"/>
</dbReference>
<dbReference type="Pfam" id="PF06450">
    <property type="entry name" value="NhaB"/>
    <property type="match status" value="1"/>
</dbReference>
<organism>
    <name type="scientific">Haemophilus ducreyi (strain 35000HP / ATCC 700724)</name>
    <dbReference type="NCBI Taxonomy" id="233412"/>
    <lineage>
        <taxon>Bacteria</taxon>
        <taxon>Pseudomonadati</taxon>
        <taxon>Pseudomonadota</taxon>
        <taxon>Gammaproteobacteria</taxon>
        <taxon>Pasteurellales</taxon>
        <taxon>Pasteurellaceae</taxon>
        <taxon>Haemophilus</taxon>
    </lineage>
</organism>
<keyword id="KW-0050">Antiport</keyword>
<keyword id="KW-0997">Cell inner membrane</keyword>
<keyword id="KW-1003">Cell membrane</keyword>
<keyword id="KW-0406">Ion transport</keyword>
<keyword id="KW-0472">Membrane</keyword>
<keyword id="KW-1185">Reference proteome</keyword>
<keyword id="KW-0915">Sodium</keyword>
<keyword id="KW-0739">Sodium transport</keyword>
<keyword id="KW-0812">Transmembrane</keyword>
<keyword id="KW-1133">Transmembrane helix</keyword>
<keyword id="KW-0813">Transport</keyword>
<proteinExistence type="inferred from homology"/>
<reference key="1">
    <citation type="submission" date="2003-06" db="EMBL/GenBank/DDBJ databases">
        <title>The complete genome sequence of Haemophilus ducreyi.</title>
        <authorList>
            <person name="Munson R.S. Jr."/>
            <person name="Ray W.C."/>
            <person name="Mahairas G."/>
            <person name="Sabo P."/>
            <person name="Mungur R."/>
            <person name="Johnson L."/>
            <person name="Nguyen D."/>
            <person name="Wang J."/>
            <person name="Forst C."/>
            <person name="Hood L."/>
        </authorList>
    </citation>
    <scope>NUCLEOTIDE SEQUENCE [LARGE SCALE GENOMIC DNA]</scope>
    <source>
        <strain>35000HP / ATCC 700724</strain>
    </source>
</reference>
<feature type="chain" id="PRO_0000333095" description="Na(+)/H(+) antiporter NhaB">
    <location>
        <begin position="1"/>
        <end position="513"/>
    </location>
</feature>
<feature type="transmembrane region" description="Helical" evidence="1">
    <location>
        <begin position="21"/>
        <end position="41"/>
    </location>
</feature>
<feature type="transmembrane region" description="Helical" evidence="1">
    <location>
        <begin position="43"/>
        <end position="63"/>
    </location>
</feature>
<feature type="transmembrane region" description="Helical" evidence="1">
    <location>
        <begin position="88"/>
        <end position="108"/>
    </location>
</feature>
<feature type="transmembrane region" description="Helical" evidence="1">
    <location>
        <begin position="137"/>
        <end position="157"/>
    </location>
</feature>
<feature type="transmembrane region" description="Helical" evidence="1">
    <location>
        <begin position="202"/>
        <end position="222"/>
    </location>
</feature>
<feature type="transmembrane region" description="Helical" evidence="1">
    <location>
        <begin position="235"/>
        <end position="255"/>
    </location>
</feature>
<feature type="transmembrane region" description="Helical" evidence="1">
    <location>
        <begin position="299"/>
        <end position="318"/>
    </location>
</feature>
<feature type="transmembrane region" description="Helical" evidence="1">
    <location>
        <begin position="322"/>
        <end position="344"/>
    </location>
</feature>
<feature type="transmembrane region" description="Helical" evidence="1">
    <location>
        <begin position="350"/>
        <end position="370"/>
    </location>
</feature>
<feature type="transmembrane region" description="Helical" evidence="1">
    <location>
        <begin position="389"/>
        <end position="409"/>
    </location>
</feature>
<feature type="transmembrane region" description="Helical" evidence="1">
    <location>
        <begin position="477"/>
        <end position="497"/>
    </location>
</feature>
<evidence type="ECO:0000255" key="1">
    <source>
        <dbReference type="HAMAP-Rule" id="MF_01599"/>
    </source>
</evidence>
<sequence>MNSSNAIFKTFLGSAPEWYKLCIITFLVINPLIYFFVSPFIAGWTLVAEFIFTLSMALKCYPLQPGGLLAIEAVAIGMTSPHHVKHEIIANFEVILLLMFMVAGIYFMKQLLLYVFTKLLIVIRSKKVLSLSFCLSAAFLSAFLDALTVIAVIISVGTGFYGVYHKVASGSTFEDSTDISNDDKIITNKKILEQFRAFLRSLLMHAAVGSALGGVMTMVGEPQNLIIASQAEWGFIEFLIRVAPVSLPVLICGIATCLLLEHFKVFGYGERLPRRVWGVLARYNVLQEQHMTKQDRVKMAIQALAGIWLIVGLALHLADVGIIGLTIIIICTAFCGITDEHAIGRSFQEPMPFTALIVVFFTIVAVIVDLKLFEPIINFVLSADPHSQLALFYVFNGLLSMISDNVFVGTVYMNETKAALTSGFISREQFDLIAVAINTGTNLPSVATPNGQAAFLFLLTSPFAPLIRLSYSRMIYMALPYTIVLSIVGFFALEYLLPPLTELMTNWGWLIAR</sequence>
<accession>Q7VKY3</accession>
<gene>
    <name evidence="1" type="primary">nhaB</name>
    <name type="ordered locus">HD_1728</name>
</gene>